<proteinExistence type="inferred from homology"/>
<gene>
    <name evidence="1" type="primary">argB</name>
    <name type="ordered locus">LIC_20090</name>
</gene>
<feature type="chain" id="PRO_0000112625" description="Acetylglutamate kinase">
    <location>
        <begin position="1"/>
        <end position="294"/>
    </location>
</feature>
<feature type="binding site" evidence="1">
    <location>
        <begin position="67"/>
        <end position="68"/>
    </location>
    <ligand>
        <name>substrate</name>
    </ligand>
</feature>
<feature type="binding site" evidence="1">
    <location>
        <position position="89"/>
    </location>
    <ligand>
        <name>substrate</name>
    </ligand>
</feature>
<feature type="binding site" evidence="1">
    <location>
        <position position="193"/>
    </location>
    <ligand>
        <name>substrate</name>
    </ligand>
</feature>
<feature type="site" description="Transition state stabilizer" evidence="1">
    <location>
        <position position="32"/>
    </location>
</feature>
<feature type="site" description="Transition state stabilizer" evidence="1">
    <location>
        <position position="252"/>
    </location>
</feature>
<comment type="function">
    <text evidence="1">Catalyzes the ATP-dependent phosphorylation of N-acetyl-L-glutamate.</text>
</comment>
<comment type="catalytic activity">
    <reaction evidence="1">
        <text>N-acetyl-L-glutamate + ATP = N-acetyl-L-glutamyl 5-phosphate + ADP</text>
        <dbReference type="Rhea" id="RHEA:14629"/>
        <dbReference type="ChEBI" id="CHEBI:30616"/>
        <dbReference type="ChEBI" id="CHEBI:44337"/>
        <dbReference type="ChEBI" id="CHEBI:57936"/>
        <dbReference type="ChEBI" id="CHEBI:456216"/>
        <dbReference type="EC" id="2.7.2.8"/>
    </reaction>
</comment>
<comment type="pathway">
    <text evidence="1">Amino-acid biosynthesis; L-arginine biosynthesis; N(2)-acetyl-L-ornithine from L-glutamate: step 2/4.</text>
</comment>
<comment type="subcellular location">
    <subcellularLocation>
        <location evidence="1">Cytoplasm</location>
    </subcellularLocation>
</comment>
<comment type="similarity">
    <text evidence="1">Belongs to the acetylglutamate kinase family. ArgB subfamily.</text>
</comment>
<name>ARGB_LEPIC</name>
<dbReference type="EC" id="2.7.2.8" evidence="1"/>
<dbReference type="EMBL" id="AE016824">
    <property type="protein sequence ID" value="AAS72119.1"/>
    <property type="molecule type" value="Genomic_DNA"/>
</dbReference>
<dbReference type="SMR" id="Q75FU1"/>
<dbReference type="KEGG" id="lic:LIC_20090"/>
<dbReference type="HOGENOM" id="CLU_053680_0_0_12"/>
<dbReference type="UniPathway" id="UPA00068">
    <property type="reaction ID" value="UER00107"/>
</dbReference>
<dbReference type="Proteomes" id="UP000007037">
    <property type="component" value="Chromosome II"/>
</dbReference>
<dbReference type="GO" id="GO:0005737">
    <property type="term" value="C:cytoplasm"/>
    <property type="evidence" value="ECO:0007669"/>
    <property type="project" value="UniProtKB-SubCell"/>
</dbReference>
<dbReference type="GO" id="GO:0003991">
    <property type="term" value="F:acetylglutamate kinase activity"/>
    <property type="evidence" value="ECO:0007669"/>
    <property type="project" value="UniProtKB-UniRule"/>
</dbReference>
<dbReference type="GO" id="GO:0005524">
    <property type="term" value="F:ATP binding"/>
    <property type="evidence" value="ECO:0007669"/>
    <property type="project" value="UniProtKB-UniRule"/>
</dbReference>
<dbReference type="GO" id="GO:0042450">
    <property type="term" value="P:arginine biosynthetic process via ornithine"/>
    <property type="evidence" value="ECO:0007669"/>
    <property type="project" value="UniProtKB-UniRule"/>
</dbReference>
<dbReference type="GO" id="GO:0006526">
    <property type="term" value="P:L-arginine biosynthetic process"/>
    <property type="evidence" value="ECO:0007669"/>
    <property type="project" value="UniProtKB-UniPathway"/>
</dbReference>
<dbReference type="CDD" id="cd04250">
    <property type="entry name" value="AAK_NAGK-C"/>
    <property type="match status" value="1"/>
</dbReference>
<dbReference type="FunFam" id="3.40.1160.10:FF:000004">
    <property type="entry name" value="Acetylglutamate kinase"/>
    <property type="match status" value="1"/>
</dbReference>
<dbReference type="Gene3D" id="3.40.1160.10">
    <property type="entry name" value="Acetylglutamate kinase-like"/>
    <property type="match status" value="1"/>
</dbReference>
<dbReference type="HAMAP" id="MF_00082">
    <property type="entry name" value="ArgB"/>
    <property type="match status" value="1"/>
</dbReference>
<dbReference type="InterPro" id="IPR036393">
    <property type="entry name" value="AceGlu_kinase-like_sf"/>
</dbReference>
<dbReference type="InterPro" id="IPR004662">
    <property type="entry name" value="AcgluKinase_fam"/>
</dbReference>
<dbReference type="InterPro" id="IPR037528">
    <property type="entry name" value="ArgB"/>
</dbReference>
<dbReference type="InterPro" id="IPR001048">
    <property type="entry name" value="Asp/Glu/Uridylate_kinase"/>
</dbReference>
<dbReference type="InterPro" id="IPR041727">
    <property type="entry name" value="NAGK-C"/>
</dbReference>
<dbReference type="NCBIfam" id="TIGR00761">
    <property type="entry name" value="argB"/>
    <property type="match status" value="1"/>
</dbReference>
<dbReference type="PANTHER" id="PTHR23342">
    <property type="entry name" value="N-ACETYLGLUTAMATE SYNTHASE"/>
    <property type="match status" value="1"/>
</dbReference>
<dbReference type="PANTHER" id="PTHR23342:SF0">
    <property type="entry name" value="N-ACETYLGLUTAMATE SYNTHASE, MITOCHONDRIAL"/>
    <property type="match status" value="1"/>
</dbReference>
<dbReference type="Pfam" id="PF00696">
    <property type="entry name" value="AA_kinase"/>
    <property type="match status" value="1"/>
</dbReference>
<dbReference type="PIRSF" id="PIRSF000728">
    <property type="entry name" value="NAGK"/>
    <property type="match status" value="1"/>
</dbReference>
<dbReference type="SUPFAM" id="SSF53633">
    <property type="entry name" value="Carbamate kinase-like"/>
    <property type="match status" value="1"/>
</dbReference>
<evidence type="ECO:0000255" key="1">
    <source>
        <dbReference type="HAMAP-Rule" id="MF_00082"/>
    </source>
</evidence>
<reference key="1">
    <citation type="journal article" date="2004" name="J. Bacteriol.">
        <title>Comparative genomics of two Leptospira interrogans serovars reveals novel insights into physiology and pathogenesis.</title>
        <authorList>
            <person name="Nascimento A.L.T.O."/>
            <person name="Ko A.I."/>
            <person name="Martins E.A.L."/>
            <person name="Monteiro-Vitorello C.B."/>
            <person name="Ho P.L."/>
            <person name="Haake D.A."/>
            <person name="Verjovski-Almeida S."/>
            <person name="Hartskeerl R.A."/>
            <person name="Marques M.V."/>
            <person name="Oliveira M.C."/>
            <person name="Menck C.F.M."/>
            <person name="Leite L.C.C."/>
            <person name="Carrer H."/>
            <person name="Coutinho L.L."/>
            <person name="Degrave W.M."/>
            <person name="Dellagostin O.A."/>
            <person name="El-Dorry H."/>
            <person name="Ferro E.S."/>
            <person name="Ferro M.I.T."/>
            <person name="Furlan L.R."/>
            <person name="Gamberini M."/>
            <person name="Giglioti E.A."/>
            <person name="Goes-Neto A."/>
            <person name="Goldman G.H."/>
            <person name="Goldman M.H.S."/>
            <person name="Harakava R."/>
            <person name="Jeronimo S.M.B."/>
            <person name="Junqueira-de-Azevedo I.L.M."/>
            <person name="Kimura E.T."/>
            <person name="Kuramae E.E."/>
            <person name="Lemos E.G.M."/>
            <person name="Lemos M.V.F."/>
            <person name="Marino C.L."/>
            <person name="Nunes L.R."/>
            <person name="de Oliveira R.C."/>
            <person name="Pereira G.G."/>
            <person name="Reis M.S."/>
            <person name="Schriefer A."/>
            <person name="Siqueira W.J."/>
            <person name="Sommer P."/>
            <person name="Tsai S.M."/>
            <person name="Simpson A.J.G."/>
            <person name="Ferro J.A."/>
            <person name="Camargo L.E.A."/>
            <person name="Kitajima J.P."/>
            <person name="Setubal J.C."/>
            <person name="Van Sluys M.A."/>
        </authorList>
    </citation>
    <scope>NUCLEOTIDE SEQUENCE [LARGE SCALE GENOMIC DNA]</scope>
    <source>
        <strain>Fiocruz L1-130</strain>
    </source>
</reference>
<organism>
    <name type="scientific">Leptospira interrogans serogroup Icterohaemorrhagiae serovar copenhageni (strain Fiocruz L1-130)</name>
    <dbReference type="NCBI Taxonomy" id="267671"/>
    <lineage>
        <taxon>Bacteria</taxon>
        <taxon>Pseudomonadati</taxon>
        <taxon>Spirochaetota</taxon>
        <taxon>Spirochaetia</taxon>
        <taxon>Leptospirales</taxon>
        <taxon>Leptospiraceae</taxon>
        <taxon>Leptospira</taxon>
    </lineage>
</organism>
<protein>
    <recommendedName>
        <fullName evidence="1">Acetylglutamate kinase</fullName>
        <ecNumber evidence="1">2.7.2.8</ecNumber>
    </recommendedName>
    <alternativeName>
        <fullName evidence="1">N-acetyl-L-glutamate 5-phosphotransferase</fullName>
    </alternativeName>
    <alternativeName>
        <fullName evidence="1">NAG kinase</fullName>
        <shortName evidence="1">NAGK</shortName>
    </alternativeName>
</protein>
<accession>Q75FU1</accession>
<sequence>MFLMEKLLERVNYILEALPYITQYSGKTVVIKYGGAAMAKADLKESFAKDIVLLKYVGIHPVIVHGGGPEINRLLDNLKIPTEFVHGHRVTDNQTMEIVEMVLTGKVNKQIVSLINSQGGKAVGISGKDGNLAKATKAPIEIELEGKEKQLFDVGLVGKIESVNPEILHNLQKAGFIPVISPVAENSEGESLNINADTFAGEIAGALKAEKLILLTDTQGILIDNQLVTGLNRNKVKDYIRKGEISGGMIPKVECCLTAIDQGVRRTHIIDGRVSHSILIEIFTDQGIGSLIES</sequence>
<keyword id="KW-0028">Amino-acid biosynthesis</keyword>
<keyword id="KW-0055">Arginine biosynthesis</keyword>
<keyword id="KW-0067">ATP-binding</keyword>
<keyword id="KW-0963">Cytoplasm</keyword>
<keyword id="KW-0418">Kinase</keyword>
<keyword id="KW-0547">Nucleotide-binding</keyword>
<keyword id="KW-0808">Transferase</keyword>